<keyword id="KW-0687">Ribonucleoprotein</keyword>
<keyword id="KW-0689">Ribosomal protein</keyword>
<keyword id="KW-0694">RNA-binding</keyword>
<keyword id="KW-0699">rRNA-binding</keyword>
<comment type="function">
    <text evidence="1">One of the primary rRNA binding proteins. Required for association of the 30S and 50S subunits to form the 70S ribosome, for tRNA binding and peptide bond formation. It has been suggested to have peptidyltransferase activity; this is somewhat controversial. Makes several contacts with the 16S rRNA in the 70S ribosome.</text>
</comment>
<comment type="subunit">
    <text evidence="1">Part of the 50S ribosomal subunit. Forms a bridge to the 30S subunit in the 70S ribosome.</text>
</comment>
<comment type="similarity">
    <text evidence="1">Belongs to the universal ribosomal protein uL2 family.</text>
</comment>
<sequence>MAVVKSKPTSAGRRHVVKVTNNDLHKGAPYAPLLDTKSKSGGRNNNGRITTRHVGGGHKQHYRMVDFRRNKDGISAVVERLEYDPNRSANIALIRYADGERRYIIASKGMVAGNIVFSGADAPIKAGNTLPLQNIPVGSTVHCVELKPGKGAQVARSAGASAQLVAREGRYVTLRLRSGEMRKVLTECRATLGEVSNSEHSLRVLGKAGATRWRGVRPTVRGAAMNPVDHPHGGGEGRSKGGRHPVTPWGVPTKGYKTRSNKRTDKLIVRRRTK</sequence>
<organism>
    <name type="scientific">Marinomonas sp. (strain MWYL1)</name>
    <dbReference type="NCBI Taxonomy" id="400668"/>
    <lineage>
        <taxon>Bacteria</taxon>
        <taxon>Pseudomonadati</taxon>
        <taxon>Pseudomonadota</taxon>
        <taxon>Gammaproteobacteria</taxon>
        <taxon>Oceanospirillales</taxon>
        <taxon>Oceanospirillaceae</taxon>
        <taxon>Marinomonas</taxon>
    </lineage>
</organism>
<proteinExistence type="inferred from homology"/>
<dbReference type="EMBL" id="CP000749">
    <property type="protein sequence ID" value="ABR73168.1"/>
    <property type="molecule type" value="Genomic_DNA"/>
</dbReference>
<dbReference type="SMR" id="A6W389"/>
<dbReference type="STRING" id="400668.Mmwyl1_4273"/>
<dbReference type="KEGG" id="mmw:Mmwyl1_4273"/>
<dbReference type="eggNOG" id="COG0090">
    <property type="taxonomic scope" value="Bacteria"/>
</dbReference>
<dbReference type="HOGENOM" id="CLU_036235_2_1_6"/>
<dbReference type="OrthoDB" id="9778722at2"/>
<dbReference type="GO" id="GO:0015934">
    <property type="term" value="C:large ribosomal subunit"/>
    <property type="evidence" value="ECO:0007669"/>
    <property type="project" value="InterPro"/>
</dbReference>
<dbReference type="GO" id="GO:0019843">
    <property type="term" value="F:rRNA binding"/>
    <property type="evidence" value="ECO:0007669"/>
    <property type="project" value="UniProtKB-UniRule"/>
</dbReference>
<dbReference type="GO" id="GO:0003735">
    <property type="term" value="F:structural constituent of ribosome"/>
    <property type="evidence" value="ECO:0007669"/>
    <property type="project" value="InterPro"/>
</dbReference>
<dbReference type="GO" id="GO:0016740">
    <property type="term" value="F:transferase activity"/>
    <property type="evidence" value="ECO:0007669"/>
    <property type="project" value="InterPro"/>
</dbReference>
<dbReference type="GO" id="GO:0002181">
    <property type="term" value="P:cytoplasmic translation"/>
    <property type="evidence" value="ECO:0007669"/>
    <property type="project" value="TreeGrafter"/>
</dbReference>
<dbReference type="FunFam" id="2.30.30.30:FF:000001">
    <property type="entry name" value="50S ribosomal protein L2"/>
    <property type="match status" value="1"/>
</dbReference>
<dbReference type="FunFam" id="2.40.50.140:FF:000003">
    <property type="entry name" value="50S ribosomal protein L2"/>
    <property type="match status" value="1"/>
</dbReference>
<dbReference type="FunFam" id="4.10.950.10:FF:000001">
    <property type="entry name" value="50S ribosomal protein L2"/>
    <property type="match status" value="1"/>
</dbReference>
<dbReference type="Gene3D" id="2.30.30.30">
    <property type="match status" value="1"/>
</dbReference>
<dbReference type="Gene3D" id="2.40.50.140">
    <property type="entry name" value="Nucleic acid-binding proteins"/>
    <property type="match status" value="1"/>
</dbReference>
<dbReference type="Gene3D" id="4.10.950.10">
    <property type="entry name" value="Ribosomal protein L2, domain 3"/>
    <property type="match status" value="1"/>
</dbReference>
<dbReference type="HAMAP" id="MF_01320_B">
    <property type="entry name" value="Ribosomal_uL2_B"/>
    <property type="match status" value="1"/>
</dbReference>
<dbReference type="InterPro" id="IPR012340">
    <property type="entry name" value="NA-bd_OB-fold"/>
</dbReference>
<dbReference type="InterPro" id="IPR014722">
    <property type="entry name" value="Rib_uL2_dom2"/>
</dbReference>
<dbReference type="InterPro" id="IPR002171">
    <property type="entry name" value="Ribosomal_uL2"/>
</dbReference>
<dbReference type="InterPro" id="IPR005880">
    <property type="entry name" value="Ribosomal_uL2_bac/org-type"/>
</dbReference>
<dbReference type="InterPro" id="IPR022669">
    <property type="entry name" value="Ribosomal_uL2_C"/>
</dbReference>
<dbReference type="InterPro" id="IPR022671">
    <property type="entry name" value="Ribosomal_uL2_CS"/>
</dbReference>
<dbReference type="InterPro" id="IPR014726">
    <property type="entry name" value="Ribosomal_uL2_dom3"/>
</dbReference>
<dbReference type="InterPro" id="IPR022666">
    <property type="entry name" value="Ribosomal_uL2_RNA-bd_dom"/>
</dbReference>
<dbReference type="InterPro" id="IPR008991">
    <property type="entry name" value="Translation_prot_SH3-like_sf"/>
</dbReference>
<dbReference type="NCBIfam" id="TIGR01171">
    <property type="entry name" value="rplB_bact"/>
    <property type="match status" value="1"/>
</dbReference>
<dbReference type="PANTHER" id="PTHR13691:SF5">
    <property type="entry name" value="LARGE RIBOSOMAL SUBUNIT PROTEIN UL2M"/>
    <property type="match status" value="1"/>
</dbReference>
<dbReference type="PANTHER" id="PTHR13691">
    <property type="entry name" value="RIBOSOMAL PROTEIN L2"/>
    <property type="match status" value="1"/>
</dbReference>
<dbReference type="Pfam" id="PF00181">
    <property type="entry name" value="Ribosomal_L2"/>
    <property type="match status" value="1"/>
</dbReference>
<dbReference type="Pfam" id="PF03947">
    <property type="entry name" value="Ribosomal_L2_C"/>
    <property type="match status" value="1"/>
</dbReference>
<dbReference type="PIRSF" id="PIRSF002158">
    <property type="entry name" value="Ribosomal_L2"/>
    <property type="match status" value="1"/>
</dbReference>
<dbReference type="SMART" id="SM01383">
    <property type="entry name" value="Ribosomal_L2"/>
    <property type="match status" value="1"/>
</dbReference>
<dbReference type="SMART" id="SM01382">
    <property type="entry name" value="Ribosomal_L2_C"/>
    <property type="match status" value="1"/>
</dbReference>
<dbReference type="SUPFAM" id="SSF50249">
    <property type="entry name" value="Nucleic acid-binding proteins"/>
    <property type="match status" value="1"/>
</dbReference>
<dbReference type="SUPFAM" id="SSF50104">
    <property type="entry name" value="Translation proteins SH3-like domain"/>
    <property type="match status" value="1"/>
</dbReference>
<dbReference type="PROSITE" id="PS00467">
    <property type="entry name" value="RIBOSOMAL_L2"/>
    <property type="match status" value="1"/>
</dbReference>
<protein>
    <recommendedName>
        <fullName evidence="1">Large ribosomal subunit protein uL2</fullName>
    </recommendedName>
    <alternativeName>
        <fullName evidence="3">50S ribosomal protein L2</fullName>
    </alternativeName>
</protein>
<reference key="1">
    <citation type="submission" date="2007-06" db="EMBL/GenBank/DDBJ databases">
        <title>Complete sequence of Marinomonas sp. MWYL1.</title>
        <authorList>
            <consortium name="US DOE Joint Genome Institute"/>
            <person name="Copeland A."/>
            <person name="Lucas S."/>
            <person name="Lapidus A."/>
            <person name="Barry K."/>
            <person name="Glavina del Rio T."/>
            <person name="Dalin E."/>
            <person name="Tice H."/>
            <person name="Pitluck S."/>
            <person name="Kiss H."/>
            <person name="Brettin T."/>
            <person name="Bruce D."/>
            <person name="Detter J.C."/>
            <person name="Han C."/>
            <person name="Schmutz J."/>
            <person name="Larimer F."/>
            <person name="Land M."/>
            <person name="Hauser L."/>
            <person name="Kyrpides N."/>
            <person name="Kim E."/>
            <person name="Johnston A.W.B."/>
            <person name="Todd J.D."/>
            <person name="Rogers R."/>
            <person name="Wexler M."/>
            <person name="Bond P.L."/>
            <person name="Li Y."/>
            <person name="Richardson P."/>
        </authorList>
    </citation>
    <scope>NUCLEOTIDE SEQUENCE [LARGE SCALE GENOMIC DNA]</scope>
    <source>
        <strain>MWYL1</strain>
    </source>
</reference>
<name>RL2_MARMS</name>
<feature type="chain" id="PRO_1000086336" description="Large ribosomal subunit protein uL2">
    <location>
        <begin position="1"/>
        <end position="274"/>
    </location>
</feature>
<feature type="region of interest" description="Disordered" evidence="2">
    <location>
        <begin position="28"/>
        <end position="59"/>
    </location>
</feature>
<feature type="region of interest" description="Disordered" evidence="2">
    <location>
        <begin position="222"/>
        <end position="274"/>
    </location>
</feature>
<feature type="compositionally biased region" description="Polar residues" evidence="2">
    <location>
        <begin position="39"/>
        <end position="49"/>
    </location>
</feature>
<feature type="compositionally biased region" description="Basic and acidic residues" evidence="2">
    <location>
        <begin position="229"/>
        <end position="239"/>
    </location>
</feature>
<evidence type="ECO:0000255" key="1">
    <source>
        <dbReference type="HAMAP-Rule" id="MF_01320"/>
    </source>
</evidence>
<evidence type="ECO:0000256" key="2">
    <source>
        <dbReference type="SAM" id="MobiDB-lite"/>
    </source>
</evidence>
<evidence type="ECO:0000305" key="3"/>
<accession>A6W389</accession>
<gene>
    <name evidence="1" type="primary">rplB</name>
    <name type="ordered locus">Mmwyl1_4273</name>
</gene>